<accession>Q4H424</accession>
<feature type="chain" id="PRO_0000444311" description="Peramine synthetase A">
    <location>
        <begin position="1"/>
        <end position="2773"/>
    </location>
</feature>
<feature type="domain" description="Carrier 1" evidence="3 9">
    <location>
        <begin position="774"/>
        <end position="850"/>
    </location>
</feature>
<feature type="domain" description="Carrier 2" evidence="3 9">
    <location>
        <begin position="2267"/>
        <end position="2345"/>
    </location>
</feature>
<feature type="region of interest" description="Adenylation 1" evidence="2 9">
    <location>
        <begin position="246"/>
        <end position="644"/>
    </location>
</feature>
<feature type="region of interest" description="Condensation" evidence="2 9">
    <location>
        <begin position="888"/>
        <end position="1301"/>
    </location>
</feature>
<feature type="region of interest" description="Adenylation 2" evidence="2 9">
    <location>
        <begin position="1321"/>
        <end position="1720"/>
    </location>
</feature>
<feature type="region of interest" description="Methylation (Met) domain" evidence="2 9">
    <location>
        <begin position="1810"/>
        <end position="1949"/>
    </location>
</feature>
<feature type="region of interest" description="Disordered" evidence="4">
    <location>
        <begin position="2250"/>
        <end position="2271"/>
    </location>
</feature>
<feature type="region of interest" description="Thiesterase (TE) domain" evidence="2 9">
    <location>
        <begin position="2397"/>
        <end position="2715"/>
    </location>
</feature>
<feature type="modified residue" description="O-(pantetheine 4'-phosphoryl)serine" evidence="3">
    <location>
        <position position="811"/>
    </location>
</feature>
<feature type="modified residue" description="O-(pantetheine 4'-phosphoryl)serine" evidence="3">
    <location>
        <position position="2304"/>
    </location>
</feature>
<gene>
    <name evidence="7" type="primary">perA</name>
</gene>
<reference key="1">
    <citation type="journal article" date="2005" name="Mol. Microbiol.">
        <title>A symbiosis expressed non-ribosomal peptide synthetase from a mutualistic fungal endophyte of perennial ryegrass confers protection to the symbiotum from insect herbivory.</title>
        <authorList>
            <person name="Tanaka A."/>
            <person name="Tapper B.A."/>
            <person name="Popay A."/>
            <person name="Parker E.J."/>
            <person name="Scott B."/>
        </authorList>
    </citation>
    <scope>NUCLEOTIDE SEQUENCE [GENOMIC DNA]</scope>
    <scope>DOMAIN</scope>
    <scope>FUNCTION</scope>
    <scope>CATALYTIC ACTIVITY</scope>
    <scope>DISRUPTION PHENOTYPE</scope>
    <source>
        <strain>Fl1</strain>
    </source>
</reference>
<reference key="2">
    <citation type="journal article" date="2010" name="Plant Physiol.">
        <title>Disruption of signaling in a fungal-grass symbiosis leads to pathogenesis.</title>
        <authorList>
            <person name="Eaton C.J."/>
            <person name="Cox M.P."/>
            <person name="Ambrose B."/>
            <person name="Becker M."/>
            <person name="Hesse U."/>
            <person name="Schardl C.L."/>
            <person name="Scott B."/>
        </authorList>
    </citation>
    <scope>INDUCTION</scope>
</reference>
<keyword id="KW-0436">Ligase</keyword>
<keyword id="KW-0489">Methyltransferase</keyword>
<keyword id="KW-0511">Multifunctional enzyme</keyword>
<keyword id="KW-0596">Phosphopantetheine</keyword>
<keyword id="KW-0597">Phosphoprotein</keyword>
<keyword id="KW-0677">Repeat</keyword>
<keyword id="KW-0808">Transferase</keyword>
<organism>
    <name type="scientific">Epichloe festucae (strain Fl1)</name>
    <dbReference type="NCBI Taxonomy" id="877507"/>
    <lineage>
        <taxon>Eukaryota</taxon>
        <taxon>Fungi</taxon>
        <taxon>Dikarya</taxon>
        <taxon>Ascomycota</taxon>
        <taxon>Pezizomycotina</taxon>
        <taxon>Sordariomycetes</taxon>
        <taxon>Hypocreomycetidae</taxon>
        <taxon>Hypocreales</taxon>
        <taxon>Clavicipitaceae</taxon>
        <taxon>Epichloe</taxon>
    </lineage>
</organism>
<comment type="function">
    <text evidence="5">Nonribosomal peptide synthetase involved in the biosynthesis of peramine, a pyrrolopyrazine synthesized in association with the grass host that protects the plant from insect herbivory (PubMed:16091042). The single multifunctional NRPS perA seems to be responsible for all catalytic steps in the biosynthesis of peramine (PubMed:16091042). The condensation domain of perA is proposed to catalyze formation of a peptide bond between 1-pyrroline-5-carboxylate and arginine (PubMed:16091042). The methylation domain of perA would catalyze the N-methylation of the alpha-amino group of arginine (PubMed:16091042). The reductase domain is proposed to be responsible for reduction of the thioester and the cyclization to form an iminium ion resulting in release from the peptide synthetase (PubMed:16091042). Deprotonation of this intermediate and oxidation of the pyrroline ring would give rise to peramine (PubMed:16091042). This final oxidation to give the pyrrole functionality may be spontaneous (PubMed:16091042).</text>
</comment>
<comment type="catalytic activity">
    <reaction evidence="5">
        <text>(S)-1-pyrroline-5-carboxylate + L-arginine + S-adenosyl-L-methionine + 2 ATP = peramine + 2 AMP + S-adenosyl-L-homocysteine + 2 diphosphate + H2O + 2 H(+)</text>
        <dbReference type="Rhea" id="RHEA:82151"/>
        <dbReference type="ChEBI" id="CHEBI:15377"/>
        <dbReference type="ChEBI" id="CHEBI:15378"/>
        <dbReference type="ChEBI" id="CHEBI:17388"/>
        <dbReference type="ChEBI" id="CHEBI:30616"/>
        <dbReference type="ChEBI" id="CHEBI:32682"/>
        <dbReference type="ChEBI" id="CHEBI:33019"/>
        <dbReference type="ChEBI" id="CHEBI:57856"/>
        <dbReference type="ChEBI" id="CHEBI:59789"/>
        <dbReference type="ChEBI" id="CHEBI:232088"/>
        <dbReference type="ChEBI" id="CHEBI:456215"/>
    </reaction>
    <physiologicalReaction direction="left-to-right" evidence="5">
        <dbReference type="Rhea" id="RHEA:82152"/>
    </physiologicalReaction>
</comment>
<comment type="cofactor">
    <cofactor evidence="3">
        <name>pantetheine 4'-phosphate</name>
        <dbReference type="ChEBI" id="CHEBI:47942"/>
    </cofactor>
</comment>
<comment type="induction">
    <text evidence="6">Expression is down-regulated when the stress-activated mitogen-activated protein kinase (sakA) is deleted (PubMed:20519633).</text>
</comment>
<comment type="domain">
    <text evidence="1 9">NRP synthetases are composed of discrete domains (adenylation (A), thiolation (T) or peptidyl carrier protein (PCP) and condensation (C) domains) which when grouped together are referred to as a single module (By similarity). Each module is responsible for the recognition (via the A domain) and incorporation of a single amino acid into the growing peptide product (By similarity). Thus, an NRP synthetase is generally composed of one or more modules and can terminate in a thioesterase domain (TE) that releases the newly synthesized peptide from the enzyme (By similarity). Occasionally, methyltransferase domains (responsible for amino acid methylation) are present within the NRP synthetase (By similarity). PerA has the following architecture: A-T-C-A-Met-T-TE (PubMed:16091042).</text>
</comment>
<comment type="disruption phenotype">
    <text evidence="5">Impairs the production of peramine and results in host susceptibility to insect herbivory (PubMed:16091042).</text>
</comment>
<comment type="similarity">
    <text evidence="8">Belongs to the NRP synthetase family.</text>
</comment>
<name>PERA_EPIFF</name>
<dbReference type="EC" id="6.3.2.-" evidence="5"/>
<dbReference type="EMBL" id="AB205145">
    <property type="protein sequence ID" value="BAE06845.2"/>
    <property type="molecule type" value="Genomic_DNA"/>
</dbReference>
<dbReference type="SMR" id="Q4H424"/>
<dbReference type="BioCyc" id="MetaCyc:MONOMER-19034"/>
<dbReference type="GO" id="GO:0005737">
    <property type="term" value="C:cytoplasm"/>
    <property type="evidence" value="ECO:0007669"/>
    <property type="project" value="TreeGrafter"/>
</dbReference>
<dbReference type="GO" id="GO:0016874">
    <property type="term" value="F:ligase activity"/>
    <property type="evidence" value="ECO:0007669"/>
    <property type="project" value="UniProtKB-KW"/>
</dbReference>
<dbReference type="GO" id="GO:0008168">
    <property type="term" value="F:methyltransferase activity"/>
    <property type="evidence" value="ECO:0007669"/>
    <property type="project" value="UniProtKB-KW"/>
</dbReference>
<dbReference type="GO" id="GO:0031177">
    <property type="term" value="F:phosphopantetheine binding"/>
    <property type="evidence" value="ECO:0007669"/>
    <property type="project" value="InterPro"/>
</dbReference>
<dbReference type="GO" id="GO:0043041">
    <property type="term" value="P:amino acid activation for nonribosomal peptide biosynthetic process"/>
    <property type="evidence" value="ECO:0007669"/>
    <property type="project" value="TreeGrafter"/>
</dbReference>
<dbReference type="GO" id="GO:0032259">
    <property type="term" value="P:methylation"/>
    <property type="evidence" value="ECO:0007669"/>
    <property type="project" value="UniProtKB-KW"/>
</dbReference>
<dbReference type="GO" id="GO:0044550">
    <property type="term" value="P:secondary metabolite biosynthetic process"/>
    <property type="evidence" value="ECO:0007669"/>
    <property type="project" value="TreeGrafter"/>
</dbReference>
<dbReference type="CDD" id="cd05918">
    <property type="entry name" value="A_NRPS_SidN3_like"/>
    <property type="match status" value="2"/>
</dbReference>
<dbReference type="CDD" id="cd02440">
    <property type="entry name" value="AdoMet_MTases"/>
    <property type="match status" value="1"/>
</dbReference>
<dbReference type="CDD" id="cd19545">
    <property type="entry name" value="FUM14_C_NRPS-like"/>
    <property type="match status" value="1"/>
</dbReference>
<dbReference type="FunFam" id="3.30.300.30:FF:000015">
    <property type="entry name" value="Nonribosomal peptide synthase SidD"/>
    <property type="match status" value="1"/>
</dbReference>
<dbReference type="FunFam" id="3.30.559.30:FF:000003">
    <property type="entry name" value="Nonribosomal peptide synthase SidD"/>
    <property type="match status" value="1"/>
</dbReference>
<dbReference type="FunFam" id="1.10.1200.10:FF:000005">
    <property type="entry name" value="Nonribosomal peptide synthetase 1"/>
    <property type="match status" value="2"/>
</dbReference>
<dbReference type="FunFam" id="3.40.50.12780:FF:000014">
    <property type="entry name" value="Nonribosomal peptide synthetase 1"/>
    <property type="match status" value="2"/>
</dbReference>
<dbReference type="Gene3D" id="3.30.300.30">
    <property type="match status" value="3"/>
</dbReference>
<dbReference type="Gene3D" id="1.10.1200.10">
    <property type="entry name" value="ACP-like"/>
    <property type="match status" value="2"/>
</dbReference>
<dbReference type="Gene3D" id="3.30.559.10">
    <property type="entry name" value="Chloramphenicol acetyltransferase-like domain"/>
    <property type="match status" value="1"/>
</dbReference>
<dbReference type="Gene3D" id="3.40.50.12780">
    <property type="entry name" value="N-terminal domain of ligase-like"/>
    <property type="match status" value="2"/>
</dbReference>
<dbReference type="Gene3D" id="3.40.50.720">
    <property type="entry name" value="NAD(P)-binding Rossmann-like Domain"/>
    <property type="match status" value="1"/>
</dbReference>
<dbReference type="Gene3D" id="3.30.559.30">
    <property type="entry name" value="Nonribosomal peptide synthetase, condensation domain"/>
    <property type="match status" value="2"/>
</dbReference>
<dbReference type="Gene3D" id="3.40.50.150">
    <property type="entry name" value="Vaccinia Virus protein VP39"/>
    <property type="match status" value="1"/>
</dbReference>
<dbReference type="InterPro" id="IPR010071">
    <property type="entry name" value="AA_adenyl_dom"/>
</dbReference>
<dbReference type="InterPro" id="IPR036736">
    <property type="entry name" value="ACP-like_sf"/>
</dbReference>
<dbReference type="InterPro" id="IPR045851">
    <property type="entry name" value="AMP-bd_C_sf"/>
</dbReference>
<dbReference type="InterPro" id="IPR020845">
    <property type="entry name" value="AMP-binding_CS"/>
</dbReference>
<dbReference type="InterPro" id="IPR000873">
    <property type="entry name" value="AMP-dep_synth/lig_dom"/>
</dbReference>
<dbReference type="InterPro" id="IPR042099">
    <property type="entry name" value="ANL_N_sf"/>
</dbReference>
<dbReference type="InterPro" id="IPR023213">
    <property type="entry name" value="CAT-like_dom_sf"/>
</dbReference>
<dbReference type="InterPro" id="IPR001242">
    <property type="entry name" value="Condensatn"/>
</dbReference>
<dbReference type="InterPro" id="IPR013120">
    <property type="entry name" value="Far_NAD-bd"/>
</dbReference>
<dbReference type="InterPro" id="IPR036291">
    <property type="entry name" value="NAD(P)-bd_dom_sf"/>
</dbReference>
<dbReference type="InterPro" id="IPR020806">
    <property type="entry name" value="PKS_PP-bd"/>
</dbReference>
<dbReference type="InterPro" id="IPR009081">
    <property type="entry name" value="PP-bd_ACP"/>
</dbReference>
<dbReference type="InterPro" id="IPR006162">
    <property type="entry name" value="Ppantetheine_attach_site"/>
</dbReference>
<dbReference type="InterPro" id="IPR029063">
    <property type="entry name" value="SAM-dependent_MTases_sf"/>
</dbReference>
<dbReference type="InterPro" id="IPR010080">
    <property type="entry name" value="Thioester_reductase-like_dom"/>
</dbReference>
<dbReference type="NCBIfam" id="TIGR01733">
    <property type="entry name" value="AA-adenyl-dom"/>
    <property type="match status" value="2"/>
</dbReference>
<dbReference type="NCBIfam" id="TIGR01746">
    <property type="entry name" value="Thioester-redct"/>
    <property type="match status" value="1"/>
</dbReference>
<dbReference type="PANTHER" id="PTHR45527:SF1">
    <property type="entry name" value="FATTY ACID SYNTHASE"/>
    <property type="match status" value="1"/>
</dbReference>
<dbReference type="PANTHER" id="PTHR45527">
    <property type="entry name" value="NONRIBOSOMAL PEPTIDE SYNTHETASE"/>
    <property type="match status" value="1"/>
</dbReference>
<dbReference type="Pfam" id="PF00501">
    <property type="entry name" value="AMP-binding"/>
    <property type="match status" value="2"/>
</dbReference>
<dbReference type="Pfam" id="PF00668">
    <property type="entry name" value="Condensation"/>
    <property type="match status" value="1"/>
</dbReference>
<dbReference type="Pfam" id="PF07993">
    <property type="entry name" value="NAD_binding_4"/>
    <property type="match status" value="1"/>
</dbReference>
<dbReference type="Pfam" id="PF00550">
    <property type="entry name" value="PP-binding"/>
    <property type="match status" value="2"/>
</dbReference>
<dbReference type="SMART" id="SM00823">
    <property type="entry name" value="PKS_PP"/>
    <property type="match status" value="2"/>
</dbReference>
<dbReference type="SMART" id="SM01294">
    <property type="entry name" value="PKS_PP_betabranch"/>
    <property type="match status" value="1"/>
</dbReference>
<dbReference type="SUPFAM" id="SSF56801">
    <property type="entry name" value="Acetyl-CoA synthetase-like"/>
    <property type="match status" value="2"/>
</dbReference>
<dbReference type="SUPFAM" id="SSF47336">
    <property type="entry name" value="ACP-like"/>
    <property type="match status" value="2"/>
</dbReference>
<dbReference type="SUPFAM" id="SSF52777">
    <property type="entry name" value="CoA-dependent acyltransferases"/>
    <property type="match status" value="3"/>
</dbReference>
<dbReference type="SUPFAM" id="SSF51735">
    <property type="entry name" value="NAD(P)-binding Rossmann-fold domains"/>
    <property type="match status" value="1"/>
</dbReference>
<dbReference type="SUPFAM" id="SSF53335">
    <property type="entry name" value="S-adenosyl-L-methionine-dependent methyltransferases"/>
    <property type="match status" value="1"/>
</dbReference>
<dbReference type="PROSITE" id="PS00455">
    <property type="entry name" value="AMP_BINDING"/>
    <property type="match status" value="1"/>
</dbReference>
<dbReference type="PROSITE" id="PS50075">
    <property type="entry name" value="CARRIER"/>
    <property type="match status" value="2"/>
</dbReference>
<dbReference type="PROSITE" id="PS00012">
    <property type="entry name" value="PHOSPHOPANTETHEINE"/>
    <property type="match status" value="1"/>
</dbReference>
<evidence type="ECO:0000250" key="1">
    <source>
        <dbReference type="UniProtKB" id="A0A144KPJ6"/>
    </source>
</evidence>
<evidence type="ECO:0000255" key="2"/>
<evidence type="ECO:0000255" key="3">
    <source>
        <dbReference type="PROSITE-ProRule" id="PRU00258"/>
    </source>
</evidence>
<evidence type="ECO:0000256" key="4">
    <source>
        <dbReference type="SAM" id="MobiDB-lite"/>
    </source>
</evidence>
<evidence type="ECO:0000269" key="5">
    <source>
    </source>
</evidence>
<evidence type="ECO:0000269" key="6">
    <source>
    </source>
</evidence>
<evidence type="ECO:0000303" key="7">
    <source>
    </source>
</evidence>
<evidence type="ECO:0000305" key="8"/>
<evidence type="ECO:0000305" key="9">
    <source>
    </source>
</evidence>
<sequence>MDAEPFDEVDEYTTYPSLPASVICPVADTKTRYELSWQPSGHHPQEEGDDCAVVTLVYAAWALMASRMTSSERVVFDTIDGRPDRPAARPLRVLCASSQTVGEYLQALRAHTSSEESYMASPDCKSKRHPTSSTLIATRTSGDAKSSNGTIGNGLPSLAGYPLVLDLQLRGSRLQATAMSDSRCTEPWIVFRLLIRLEYCMKGLHEADSRTRLADIDLMSPDDVEQIWKWNGTLPAAVERCMHDMFEDQVYSQPLALAVDAWDGRLTYKELDELSEKLAGHLIDADVGPEVIVPLCFEKSMWMPIAMLGVLKAGGSFTLLEPSFPEQRLRTIVEKVNASVMISSPSNMSLSSRLLKRVVELDSCSVKSFSAHPSRPRNSQPSSTAMFAVFTSGSTGVPKGAILTHTNYSSALAYQLQPLGFTKDSRVFDFASYAFDVSVHNVFATLTSGACLCIPSDEDRHNDISKVMVDMRVTISHLTPSVTRLIDPDSQPFLKTMVFTGEPLSVDDATRWWGKVDVVNEYGPAECTINTVNSRPISPEAATNIGLPVGVAAWITDPENHQVLVPIGCVGELLVEGPLVGRGYIGDPIKTAASFIQDPKWLLRGVSGHPGRKGRLYKTGDLVRYCADGSLSYLGRKDAQVKIRGQRVHLGDVEHWTQVCMPEAQRVFADVIEPQAISPVPTLAVFVQSPEMGENTATNERPVQIRALRADVQAKLSQHLPSYMVPTVSFWMETLPMTPTGKMDRRMLRRIGSSFSAEQLAQARADRRDGPKRQPTCEMEERMRNIWARVLGMLPQDIHLESNFFHLGGDSIASMRVVAYARRLGIQVMVADVFQHPSLHDLAKNCSQTLARAPEDIPAFSLLGPHFNHALFVQDMSTRYALDPMTIQDAYPCTRLQEGLMFLTSKRPGDYIEQNVLELARDLSLEGLRNAWEQAVKAMPILRTRIAQHNHVGLVQLVLDDTADWDEAKGLEKYLAADRKRSMGLGEPLSRFALVRDEEGTCKWLVWTIHHAIYDGWSIRLVTDAVAEAYGGRSIPQGPQFQAFIKYVQDQDERAAVNYWQRNLQGFDSAPFPPNVPSVDQPVADAAVAHSFATPSGAHGCITTSMLIRAAWALVVGRMANSNDVVFGSTLHGRNAAVNGLDEMVAPTIATIPVRVRFCSTQYVPSYLQAITQEAAEMMPYEQTGLQRIAALSSDAEKACKFQTHVVIQPEDCIPGRSLLGQWRSDSQDQWFSTYALTVEVWLRSDDIFASAMFDSRTIQSWVVTGMLQRLEWTMHQLHHATPSQTLGEINMSSAEDLEQIWQWNERVPEPVNRCIHDLLADQVQARPDSPAICAWDGELTYRKLDELSTRMSHSLLQLGAGFHKGLVPLCFDKSMWTAVAILGVLKAGVGFILLDPHLPEQRMRDIVDQVGSKVIVTCPTREILCSRLAEATVAISWDYFSGQLDWTQQELPSVSPSSTAYVVFTSGSTGTPKGVVVTHANAVSAQHHQLEPMGHTPESRLFDFASYSFDVSISNIVSMLACGGCLCVPSESDRTDDMEKSIVSLRVNALDLTPSTLQLLSPERLPAVRQLTLGGEPLREADVEKWCGKTRICNAYGPSECTPTATINSNAMEPQMATHIGKGAGVVTWIVDADDHDELLPLGCTGELLLEGPLVGRGYFNDSAKTAAAFIEDPKWLLRGSISHPGRQGRLYKTGDLVKYNRDGSLAFVGRKDTQVKVRGQRVEPGEIEAVLRSHESVDGAVVVFHRLTDQELWLAAFVTTREDDGKIPQSQSLAHDETQLKQKRIQAWEEEFEGETYLAIGATEAENIGRDFVGWSSMYDGSEINKVEMNEWLDDTIATMLNGGPAGHVLEIGSGSGMMLFNLANHSLQSYIGVDPAMRAVDFTTKAAKSVPDLADKVNVFKGTAEDIMNLDMPIHSELAVMNSVVQYFPSQDYLFNIIQHLASLGSIKTIFVGDIRSHALHKEFMARRALHIAGKDASREEFSGIMENLLKGEPELLVDPGFFTSLPHRIHGVTHVEILPKRMKATNELSSYRYAAVLHVNSHGEQAKDGRAQDIGADEWIDYVSNGLDRQAVSGLLGTASRVAISNIPYSKTIYEREIVNAVEASKNIPKLERESEWLAAALQASQEHSSLCAFDLAELAQLAGYRVECSWARQYSQRGGLDAVFYCGGSGTDSERRTLFRFPTDHEGRPCHVLSTNPLEQQRKSKLRGDLEQLLRSKLPSYMVPQAIKILDKMPVNHTGKIDRSMLSESLQQKAPPTARKRLPSTAPERAMQQIWSKVLSIESSQIGLDDGFIKLGGNSLSAMKVVSMAREEGIRLEVADMFHHSTTSIAHLLQTAAAGVSESGAALPGVTSDRLLSDLARYDCTIAMAQSEAANKRLSATSHGGIRDTRLTVVLTGANGFIGTQILRQLLDHGRFSRVIAIVRGTSASKARQRAIDAAKNAQWWSEFYSSELEVWRGDLALPRLGLGKENWNTLADGTVDVFIHNGASVHFMKSYSALQAANVESTAQVLRVAAENPSMRVVYVSSARCCDPELEREEDVAKALADRPNGYTTTKFIAEALVKRAAARGLGRRDQFAVVSPGLVVGTPTEGVANADDWLWRMTAACIRVGVVNGEESDNWIPIADAAATATTVIETSLGRSSGIVTQVKGGLTMGEFWETLRAIGYTLRGEDSSTCMAAIRQDVEKNRDTHPLGALSDMLQDLADTARSQWADSWRTGGLSSPARLKLALVKSAGFLSKVGVLPLPDGNDEPAQARENLRAFTRSGG</sequence>
<protein>
    <recommendedName>
        <fullName evidence="7">Peramine synthetase A</fullName>
        <ecNumber evidence="5">6.3.2.-</ecNumber>
    </recommendedName>
    <alternativeName>
        <fullName evidence="7">Nonribosomal peptide synthetase perA</fullName>
        <shortName evidence="8">NRPS perA</shortName>
    </alternativeName>
</protein>
<proteinExistence type="evidence at protein level"/>